<dbReference type="EC" id="3.1.-.-" evidence="1"/>
<dbReference type="EMBL" id="CP000024">
    <property type="protein sequence ID" value="AAV61999.1"/>
    <property type="molecule type" value="Genomic_DNA"/>
</dbReference>
<dbReference type="RefSeq" id="WP_011225535.1">
    <property type="nucleotide sequence ID" value="NC_006449.1"/>
</dbReference>
<dbReference type="SMR" id="Q5M171"/>
<dbReference type="KEGG" id="stc:str0397"/>
<dbReference type="HOGENOM" id="CLU_028328_1_0_9"/>
<dbReference type="GO" id="GO:0005886">
    <property type="term" value="C:plasma membrane"/>
    <property type="evidence" value="ECO:0007669"/>
    <property type="project" value="UniProtKB-SubCell"/>
</dbReference>
<dbReference type="GO" id="GO:0003723">
    <property type="term" value="F:RNA binding"/>
    <property type="evidence" value="ECO:0007669"/>
    <property type="project" value="UniProtKB-UniRule"/>
</dbReference>
<dbReference type="GO" id="GO:0004521">
    <property type="term" value="F:RNA endonuclease activity"/>
    <property type="evidence" value="ECO:0007669"/>
    <property type="project" value="UniProtKB-UniRule"/>
</dbReference>
<dbReference type="GO" id="GO:0006402">
    <property type="term" value="P:mRNA catabolic process"/>
    <property type="evidence" value="ECO:0007669"/>
    <property type="project" value="UniProtKB-UniRule"/>
</dbReference>
<dbReference type="CDD" id="cd00077">
    <property type="entry name" value="HDc"/>
    <property type="match status" value="1"/>
</dbReference>
<dbReference type="CDD" id="cd22431">
    <property type="entry name" value="KH-I_RNaseY"/>
    <property type="match status" value="1"/>
</dbReference>
<dbReference type="FunFam" id="1.10.3210.10:FF:000003">
    <property type="entry name" value="Ribonuclease Y"/>
    <property type="match status" value="1"/>
</dbReference>
<dbReference type="FunFam" id="3.30.1370.10:FF:000006">
    <property type="entry name" value="Ribonuclease Y"/>
    <property type="match status" value="1"/>
</dbReference>
<dbReference type="Gene3D" id="1.10.3210.10">
    <property type="entry name" value="Hypothetical protein af1432"/>
    <property type="match status" value="1"/>
</dbReference>
<dbReference type="Gene3D" id="3.30.1370.10">
    <property type="entry name" value="K Homology domain, type 1"/>
    <property type="match status" value="1"/>
</dbReference>
<dbReference type="HAMAP" id="MF_00335">
    <property type="entry name" value="RNase_Y"/>
    <property type="match status" value="1"/>
</dbReference>
<dbReference type="InterPro" id="IPR003607">
    <property type="entry name" value="HD/PDEase_dom"/>
</dbReference>
<dbReference type="InterPro" id="IPR006674">
    <property type="entry name" value="HD_domain"/>
</dbReference>
<dbReference type="InterPro" id="IPR006675">
    <property type="entry name" value="HDIG_dom"/>
</dbReference>
<dbReference type="InterPro" id="IPR004087">
    <property type="entry name" value="KH_dom"/>
</dbReference>
<dbReference type="InterPro" id="IPR004088">
    <property type="entry name" value="KH_dom_type_1"/>
</dbReference>
<dbReference type="InterPro" id="IPR036612">
    <property type="entry name" value="KH_dom_type_1_sf"/>
</dbReference>
<dbReference type="InterPro" id="IPR017705">
    <property type="entry name" value="Ribonuclease_Y"/>
</dbReference>
<dbReference type="InterPro" id="IPR022711">
    <property type="entry name" value="RNase_Y_N"/>
</dbReference>
<dbReference type="NCBIfam" id="TIGR00277">
    <property type="entry name" value="HDIG"/>
    <property type="match status" value="1"/>
</dbReference>
<dbReference type="NCBIfam" id="NF000997">
    <property type="entry name" value="PRK00106.1"/>
    <property type="match status" value="1"/>
</dbReference>
<dbReference type="NCBIfam" id="TIGR03319">
    <property type="entry name" value="RNase_Y"/>
    <property type="match status" value="1"/>
</dbReference>
<dbReference type="PANTHER" id="PTHR12826">
    <property type="entry name" value="RIBONUCLEASE Y"/>
    <property type="match status" value="1"/>
</dbReference>
<dbReference type="PANTHER" id="PTHR12826:SF15">
    <property type="entry name" value="RIBONUCLEASE Y"/>
    <property type="match status" value="1"/>
</dbReference>
<dbReference type="Pfam" id="PF01966">
    <property type="entry name" value="HD"/>
    <property type="match status" value="1"/>
</dbReference>
<dbReference type="Pfam" id="PF00013">
    <property type="entry name" value="KH_1"/>
    <property type="match status" value="1"/>
</dbReference>
<dbReference type="Pfam" id="PF12072">
    <property type="entry name" value="RNase_Y_N"/>
    <property type="match status" value="1"/>
</dbReference>
<dbReference type="SMART" id="SM00471">
    <property type="entry name" value="HDc"/>
    <property type="match status" value="1"/>
</dbReference>
<dbReference type="SMART" id="SM00322">
    <property type="entry name" value="KH"/>
    <property type="match status" value="1"/>
</dbReference>
<dbReference type="SUPFAM" id="SSF54791">
    <property type="entry name" value="Eukaryotic type KH-domain (KH-domain type I)"/>
    <property type="match status" value="1"/>
</dbReference>
<dbReference type="SUPFAM" id="SSF109604">
    <property type="entry name" value="HD-domain/PDEase-like"/>
    <property type="match status" value="1"/>
</dbReference>
<dbReference type="PROSITE" id="PS51831">
    <property type="entry name" value="HD"/>
    <property type="match status" value="1"/>
</dbReference>
<dbReference type="PROSITE" id="PS50084">
    <property type="entry name" value="KH_TYPE_1"/>
    <property type="match status" value="1"/>
</dbReference>
<name>RNY_STRT1</name>
<protein>
    <recommendedName>
        <fullName evidence="1">Ribonuclease Y</fullName>
        <shortName evidence="1">RNase Y</shortName>
        <ecNumber evidence="1">3.1.-.-</ecNumber>
    </recommendedName>
</protein>
<reference key="1">
    <citation type="journal article" date="2004" name="Nat. Biotechnol.">
        <title>Complete sequence and comparative genome analysis of the dairy bacterium Streptococcus thermophilus.</title>
        <authorList>
            <person name="Bolotin A."/>
            <person name="Quinquis B."/>
            <person name="Renault P."/>
            <person name="Sorokin A."/>
            <person name="Ehrlich S.D."/>
            <person name="Kulakauskas S."/>
            <person name="Lapidus A."/>
            <person name="Goltsman E."/>
            <person name="Mazur M."/>
            <person name="Pusch G.D."/>
            <person name="Fonstein M."/>
            <person name="Overbeek R."/>
            <person name="Kyprides N."/>
            <person name="Purnelle B."/>
            <person name="Prozzi D."/>
            <person name="Ngui K."/>
            <person name="Masuy D."/>
            <person name="Hancy F."/>
            <person name="Burteau S."/>
            <person name="Boutry M."/>
            <person name="Delcour J."/>
            <person name="Goffeau A."/>
            <person name="Hols P."/>
        </authorList>
    </citation>
    <scope>NUCLEOTIDE SEQUENCE [LARGE SCALE GENOMIC DNA]</scope>
    <source>
        <strain>CNRZ 1066</strain>
    </source>
</reference>
<evidence type="ECO:0000255" key="1">
    <source>
        <dbReference type="HAMAP-Rule" id="MF_00335"/>
    </source>
</evidence>
<evidence type="ECO:0000255" key="2">
    <source>
        <dbReference type="PROSITE-ProRule" id="PRU01175"/>
    </source>
</evidence>
<evidence type="ECO:0000256" key="3">
    <source>
        <dbReference type="SAM" id="MobiDB-lite"/>
    </source>
</evidence>
<feature type="chain" id="PRO_0000344954" description="Ribonuclease Y">
    <location>
        <begin position="1"/>
        <end position="535"/>
    </location>
</feature>
<feature type="transmembrane region" description="Helical" evidence="1">
    <location>
        <begin position="4"/>
        <end position="24"/>
    </location>
</feature>
<feature type="domain" description="KH" evidence="1">
    <location>
        <begin position="225"/>
        <end position="285"/>
    </location>
</feature>
<feature type="domain" description="HD" evidence="2">
    <location>
        <begin position="351"/>
        <end position="444"/>
    </location>
</feature>
<feature type="region of interest" description="Disordered" evidence="3">
    <location>
        <begin position="103"/>
        <end position="149"/>
    </location>
</feature>
<keyword id="KW-1003">Cell membrane</keyword>
<keyword id="KW-0255">Endonuclease</keyword>
<keyword id="KW-0378">Hydrolase</keyword>
<keyword id="KW-0472">Membrane</keyword>
<keyword id="KW-0540">Nuclease</keyword>
<keyword id="KW-0694">RNA-binding</keyword>
<keyword id="KW-0812">Transmembrane</keyword>
<keyword id="KW-1133">Transmembrane helix</keyword>
<comment type="function">
    <text evidence="1">Endoribonuclease that initiates mRNA decay.</text>
</comment>
<comment type="subcellular location">
    <subcellularLocation>
        <location evidence="1">Cell membrane</location>
        <topology evidence="1">Single-pass membrane protein</topology>
    </subcellularLocation>
</comment>
<comment type="similarity">
    <text evidence="1">Belongs to the RNase Y family.</text>
</comment>
<sequence length="535" mass="60397">MINMIILVVFALIGLVVGYSAISIKLSKAKEQAETILLKAEQDAVNLRSQAEHDADHLRVTAERESKAQRKELLLEAKEKARKYREDIEEEFKSERQELKQMENRLTERATSLDRKDENLSSKELALEKKEQSLADKSKHLNEREENVTQLEAEKQAELERIGQMTIAEAREVILTETENNLTHEIATRIKDAEAQIKDTVDKKAKNLLAQAMQRLSGDYVTEQTVTTVHLPDDNMKGRIIGREGRNIRTLESLTGIDVIIDDTPEVVVLSGFDPIRREIARMTLEALIKDGRIHPARIEELVEKSRKEMDNRIREYGEEAAYEIGAMNLHPDLIKIMGRLQFRTSYGQNVLRHSVEVGKLAGIMASELGENVALARRAGFLHDMGKAIDKEVEGSHVEIGTEFARKYKEHPVVVNAIASHHGDVEPESVIAVIVAAADALSSARPGARNESVENYVKRLRDLEEIASSFDGVQTSFALQAGREIRIMVHPNKISDDEVTILSHKIREQIEKNLDYPGNIKVTVIREFRAVDYAK</sequence>
<gene>
    <name evidence="1" type="primary">rny</name>
    <name type="ordered locus">str0397</name>
</gene>
<accession>Q5M171</accession>
<organism>
    <name type="scientific">Streptococcus thermophilus (strain CNRZ 1066)</name>
    <dbReference type="NCBI Taxonomy" id="299768"/>
    <lineage>
        <taxon>Bacteria</taxon>
        <taxon>Bacillati</taxon>
        <taxon>Bacillota</taxon>
        <taxon>Bacilli</taxon>
        <taxon>Lactobacillales</taxon>
        <taxon>Streptococcaceae</taxon>
        <taxon>Streptococcus</taxon>
    </lineage>
</organism>
<proteinExistence type="inferred from homology"/>